<evidence type="ECO:0000305" key="1"/>
<feature type="chain" id="PRO_0000283177" description="Putative F-box/kelch-repeat protein At1g27420">
    <location>
        <begin position="1"/>
        <end position="346"/>
    </location>
</feature>
<feature type="domain" description="F-box">
    <location>
        <begin position="9"/>
        <end position="56"/>
    </location>
</feature>
<feature type="repeat" description="Kelch 1">
    <location>
        <begin position="62"/>
        <end position="109"/>
    </location>
</feature>
<feature type="repeat" description="Kelch 2">
    <location>
        <begin position="111"/>
        <end position="167"/>
    </location>
</feature>
<feature type="repeat" description="Kelch 3">
    <location>
        <begin position="168"/>
        <end position="215"/>
    </location>
</feature>
<feature type="repeat" description="Kelch 4">
    <location>
        <begin position="217"/>
        <end position="257"/>
    </location>
</feature>
<feature type="repeat" description="Kelch 5">
    <location>
        <begin position="259"/>
        <end position="300"/>
    </location>
</feature>
<keyword id="KW-0880">Kelch repeat</keyword>
<keyword id="KW-1185">Reference proteome</keyword>
<keyword id="KW-0677">Repeat</keyword>
<name>FBK16_ARATH</name>
<proteinExistence type="predicted"/>
<dbReference type="EMBL" id="AC004557">
    <property type="protein sequence ID" value="AAF99736.1"/>
    <property type="status" value="ALT_SEQ"/>
    <property type="molecule type" value="Genomic_DNA"/>
</dbReference>
<dbReference type="EMBL" id="CP002684">
    <property type="protein sequence ID" value="AEE30827.1"/>
    <property type="molecule type" value="Genomic_DNA"/>
</dbReference>
<dbReference type="RefSeq" id="NP_174062.1">
    <property type="nucleotide sequence ID" value="NM_102505.2"/>
</dbReference>
<dbReference type="SMR" id="Q9FZJ3"/>
<dbReference type="PaxDb" id="3702-AT1G27420.1"/>
<dbReference type="EnsemblPlants" id="AT1G27420.1">
    <property type="protein sequence ID" value="AT1G27420.1"/>
    <property type="gene ID" value="AT1G27420"/>
</dbReference>
<dbReference type="GeneID" id="839632"/>
<dbReference type="Gramene" id="AT1G27420.1">
    <property type="protein sequence ID" value="AT1G27420.1"/>
    <property type="gene ID" value="AT1G27420"/>
</dbReference>
<dbReference type="KEGG" id="ath:AT1G27420"/>
<dbReference type="Araport" id="AT1G27420"/>
<dbReference type="TAIR" id="AT1G27420"/>
<dbReference type="eggNOG" id="KOG1072">
    <property type="taxonomic scope" value="Eukaryota"/>
</dbReference>
<dbReference type="HOGENOM" id="CLU_028510_3_0_1"/>
<dbReference type="InParanoid" id="Q9FZJ3"/>
<dbReference type="OMA" id="QTWEELN"/>
<dbReference type="OrthoDB" id="45365at2759"/>
<dbReference type="PRO" id="PR:Q9FZJ3"/>
<dbReference type="Proteomes" id="UP000006548">
    <property type="component" value="Chromosome 1"/>
</dbReference>
<dbReference type="ExpressionAtlas" id="Q9FZJ3">
    <property type="expression patterns" value="baseline and differential"/>
</dbReference>
<dbReference type="CDD" id="cd22152">
    <property type="entry name" value="F-box_AtAFR-like"/>
    <property type="match status" value="1"/>
</dbReference>
<dbReference type="Gene3D" id="2.120.10.80">
    <property type="entry name" value="Kelch-type beta propeller"/>
    <property type="match status" value="1"/>
</dbReference>
<dbReference type="InterPro" id="IPR036047">
    <property type="entry name" value="F-box-like_dom_sf"/>
</dbReference>
<dbReference type="InterPro" id="IPR001810">
    <property type="entry name" value="F-box_dom"/>
</dbReference>
<dbReference type="InterPro" id="IPR015915">
    <property type="entry name" value="Kelch-typ_b-propeller"/>
</dbReference>
<dbReference type="InterPro" id="IPR006652">
    <property type="entry name" value="Kelch_1"/>
</dbReference>
<dbReference type="PANTHER" id="PTHR46344">
    <property type="entry name" value="OS02G0202900 PROTEIN"/>
    <property type="match status" value="1"/>
</dbReference>
<dbReference type="PANTHER" id="PTHR46344:SF1">
    <property type="entry name" value="OS02G0504900 PROTEIN"/>
    <property type="match status" value="1"/>
</dbReference>
<dbReference type="Pfam" id="PF00646">
    <property type="entry name" value="F-box"/>
    <property type="match status" value="1"/>
</dbReference>
<dbReference type="Pfam" id="PF25210">
    <property type="entry name" value="Kelch_FKB95"/>
    <property type="match status" value="1"/>
</dbReference>
<dbReference type="SMART" id="SM00612">
    <property type="entry name" value="Kelch"/>
    <property type="match status" value="2"/>
</dbReference>
<dbReference type="SUPFAM" id="SSF81383">
    <property type="entry name" value="F-box domain"/>
    <property type="match status" value="1"/>
</dbReference>
<dbReference type="SUPFAM" id="SSF117281">
    <property type="entry name" value="Kelch motif"/>
    <property type="match status" value="1"/>
</dbReference>
<gene>
    <name type="ordered locus">At1g27420</name>
    <name type="ORF">F17L21.21</name>
</gene>
<accession>Q9FZJ3</accession>
<accession>F4HSW7</accession>
<protein>
    <recommendedName>
        <fullName>Putative F-box/kelch-repeat protein At1g27420</fullName>
    </recommendedName>
</protein>
<comment type="sequence caution" evidence="1">
    <conflict type="erroneous gene model prediction">
        <sequence resource="EMBL-CDS" id="AAF99736"/>
    </conflict>
</comment>
<sequence>MVVESSSSPIIPGLTDDVAELCVSKIPRSSFQITSQVCRRWRSFLRSQHFAAVRKLTGTVEEFLCVLMESECGRDVYWEVFDASGNKLGQIPPVPGPLKRGFGVAVLDGGKIVFFGGYTEVEGSGINSTTVSASADVYEFDPANNSWRKLAGMNIPRYNFAFAEVNGLLYVIRGYSTDTYSLSNAEVYNPKTNQWSLMHCPNRPVWRGFAFAFSSKLYAVGNGSRFIDIYDPKTQTWEELNSEQSVSVYSYTVVRNKVYFMDRNMPGRLGVFDPEENSWSSVFVPPREGGFWVRLGVWNNKVLLFSRVCGHETLMYDLDKEKGSKWRVCDQIKPSASQLASVLINF</sequence>
<reference key="1">
    <citation type="journal article" date="2000" name="Nature">
        <title>Sequence and analysis of chromosome 1 of the plant Arabidopsis thaliana.</title>
        <authorList>
            <person name="Theologis A."/>
            <person name="Ecker J.R."/>
            <person name="Palm C.J."/>
            <person name="Federspiel N.A."/>
            <person name="Kaul S."/>
            <person name="White O."/>
            <person name="Alonso J."/>
            <person name="Altafi H."/>
            <person name="Araujo R."/>
            <person name="Bowman C.L."/>
            <person name="Brooks S.Y."/>
            <person name="Buehler E."/>
            <person name="Chan A."/>
            <person name="Chao Q."/>
            <person name="Chen H."/>
            <person name="Cheuk R.F."/>
            <person name="Chin C.W."/>
            <person name="Chung M.K."/>
            <person name="Conn L."/>
            <person name="Conway A.B."/>
            <person name="Conway A.R."/>
            <person name="Creasy T.H."/>
            <person name="Dewar K."/>
            <person name="Dunn P."/>
            <person name="Etgu P."/>
            <person name="Feldblyum T.V."/>
            <person name="Feng J.-D."/>
            <person name="Fong B."/>
            <person name="Fujii C.Y."/>
            <person name="Gill J.E."/>
            <person name="Goldsmith A.D."/>
            <person name="Haas B."/>
            <person name="Hansen N.F."/>
            <person name="Hughes B."/>
            <person name="Huizar L."/>
            <person name="Hunter J.L."/>
            <person name="Jenkins J."/>
            <person name="Johnson-Hopson C."/>
            <person name="Khan S."/>
            <person name="Khaykin E."/>
            <person name="Kim C.J."/>
            <person name="Koo H.L."/>
            <person name="Kremenetskaia I."/>
            <person name="Kurtz D.B."/>
            <person name="Kwan A."/>
            <person name="Lam B."/>
            <person name="Langin-Hooper S."/>
            <person name="Lee A."/>
            <person name="Lee J.M."/>
            <person name="Lenz C.A."/>
            <person name="Li J.H."/>
            <person name="Li Y.-P."/>
            <person name="Lin X."/>
            <person name="Liu S.X."/>
            <person name="Liu Z.A."/>
            <person name="Luros J.S."/>
            <person name="Maiti R."/>
            <person name="Marziali A."/>
            <person name="Militscher J."/>
            <person name="Miranda M."/>
            <person name="Nguyen M."/>
            <person name="Nierman W.C."/>
            <person name="Osborne B.I."/>
            <person name="Pai G."/>
            <person name="Peterson J."/>
            <person name="Pham P.K."/>
            <person name="Rizzo M."/>
            <person name="Rooney T."/>
            <person name="Rowley D."/>
            <person name="Sakano H."/>
            <person name="Salzberg S.L."/>
            <person name="Schwartz J.R."/>
            <person name="Shinn P."/>
            <person name="Southwick A.M."/>
            <person name="Sun H."/>
            <person name="Tallon L.J."/>
            <person name="Tambunga G."/>
            <person name="Toriumi M.J."/>
            <person name="Town C.D."/>
            <person name="Utterback T."/>
            <person name="Van Aken S."/>
            <person name="Vaysberg M."/>
            <person name="Vysotskaia V.S."/>
            <person name="Walker M."/>
            <person name="Wu D."/>
            <person name="Yu G."/>
            <person name="Fraser C.M."/>
            <person name="Venter J.C."/>
            <person name="Davis R.W."/>
        </authorList>
    </citation>
    <scope>NUCLEOTIDE SEQUENCE [LARGE SCALE GENOMIC DNA]</scope>
    <source>
        <strain>cv. Columbia</strain>
    </source>
</reference>
<reference key="2">
    <citation type="journal article" date="2017" name="Plant J.">
        <title>Araport11: a complete reannotation of the Arabidopsis thaliana reference genome.</title>
        <authorList>
            <person name="Cheng C.Y."/>
            <person name="Krishnakumar V."/>
            <person name="Chan A.P."/>
            <person name="Thibaud-Nissen F."/>
            <person name="Schobel S."/>
            <person name="Town C.D."/>
        </authorList>
    </citation>
    <scope>GENOME REANNOTATION</scope>
    <source>
        <strain>cv. Columbia</strain>
    </source>
</reference>
<organism>
    <name type="scientific">Arabidopsis thaliana</name>
    <name type="common">Mouse-ear cress</name>
    <dbReference type="NCBI Taxonomy" id="3702"/>
    <lineage>
        <taxon>Eukaryota</taxon>
        <taxon>Viridiplantae</taxon>
        <taxon>Streptophyta</taxon>
        <taxon>Embryophyta</taxon>
        <taxon>Tracheophyta</taxon>
        <taxon>Spermatophyta</taxon>
        <taxon>Magnoliopsida</taxon>
        <taxon>eudicotyledons</taxon>
        <taxon>Gunneridae</taxon>
        <taxon>Pentapetalae</taxon>
        <taxon>rosids</taxon>
        <taxon>malvids</taxon>
        <taxon>Brassicales</taxon>
        <taxon>Brassicaceae</taxon>
        <taxon>Camelineae</taxon>
        <taxon>Arabidopsis</taxon>
    </lineage>
</organism>